<gene>
    <name evidence="1" type="primary">tmcAL</name>
    <name type="ordered locus">LMHCC_0511</name>
</gene>
<accession>B8DH80</accession>
<keyword id="KW-0067">ATP-binding</keyword>
<keyword id="KW-0963">Cytoplasm</keyword>
<keyword id="KW-0436">Ligase</keyword>
<keyword id="KW-0547">Nucleotide-binding</keyword>
<keyword id="KW-0694">RNA-binding</keyword>
<keyword id="KW-0819">tRNA processing</keyword>
<keyword id="KW-0820">tRNA-binding</keyword>
<dbReference type="EC" id="6.3.4.-" evidence="1"/>
<dbReference type="EMBL" id="CP001175">
    <property type="protein sequence ID" value="ACK38868.1"/>
    <property type="molecule type" value="Genomic_DNA"/>
</dbReference>
<dbReference type="RefSeq" id="WP_012580990.1">
    <property type="nucleotide sequence ID" value="NC_011660.1"/>
</dbReference>
<dbReference type="SMR" id="B8DH80"/>
<dbReference type="KEGG" id="lmh:LMHCC_0511"/>
<dbReference type="HOGENOM" id="CLU_038915_0_2_9"/>
<dbReference type="GO" id="GO:0005737">
    <property type="term" value="C:cytoplasm"/>
    <property type="evidence" value="ECO:0007669"/>
    <property type="project" value="UniProtKB-SubCell"/>
</dbReference>
<dbReference type="GO" id="GO:0005524">
    <property type="term" value="F:ATP binding"/>
    <property type="evidence" value="ECO:0007669"/>
    <property type="project" value="UniProtKB-KW"/>
</dbReference>
<dbReference type="GO" id="GO:0016879">
    <property type="term" value="F:ligase activity, forming carbon-nitrogen bonds"/>
    <property type="evidence" value="ECO:0007669"/>
    <property type="project" value="UniProtKB-UniRule"/>
</dbReference>
<dbReference type="GO" id="GO:0000049">
    <property type="term" value="F:tRNA binding"/>
    <property type="evidence" value="ECO:0007669"/>
    <property type="project" value="UniProtKB-KW"/>
</dbReference>
<dbReference type="GO" id="GO:0006400">
    <property type="term" value="P:tRNA modification"/>
    <property type="evidence" value="ECO:0007669"/>
    <property type="project" value="UniProtKB-UniRule"/>
</dbReference>
<dbReference type="Gene3D" id="3.40.50.620">
    <property type="entry name" value="HUPs"/>
    <property type="match status" value="1"/>
</dbReference>
<dbReference type="HAMAP" id="MF_01539">
    <property type="entry name" value="TmcAL"/>
    <property type="match status" value="1"/>
</dbReference>
<dbReference type="InterPro" id="IPR014729">
    <property type="entry name" value="Rossmann-like_a/b/a_fold"/>
</dbReference>
<dbReference type="InterPro" id="IPR008513">
    <property type="entry name" value="tRNA(Met)_cyd_acetate_ligase"/>
</dbReference>
<dbReference type="NCBIfam" id="NF010191">
    <property type="entry name" value="PRK13670.1"/>
    <property type="match status" value="1"/>
</dbReference>
<dbReference type="PANTHER" id="PTHR37825">
    <property type="entry name" value="TRNA(MET) CYTIDINE ACETATE LIGASE"/>
    <property type="match status" value="1"/>
</dbReference>
<dbReference type="PANTHER" id="PTHR37825:SF1">
    <property type="entry name" value="TRNA(MET) CYTIDINE ACETATE LIGASE"/>
    <property type="match status" value="1"/>
</dbReference>
<dbReference type="Pfam" id="PF05636">
    <property type="entry name" value="HIGH_NTase1"/>
    <property type="match status" value="1"/>
</dbReference>
<dbReference type="SUPFAM" id="SSF52374">
    <property type="entry name" value="Nucleotidylyl transferase"/>
    <property type="match status" value="1"/>
</dbReference>
<organism>
    <name type="scientific">Listeria monocytogenes serotype 4a (strain HCC23)</name>
    <dbReference type="NCBI Taxonomy" id="552536"/>
    <lineage>
        <taxon>Bacteria</taxon>
        <taxon>Bacillati</taxon>
        <taxon>Bacillota</taxon>
        <taxon>Bacilli</taxon>
        <taxon>Bacillales</taxon>
        <taxon>Listeriaceae</taxon>
        <taxon>Listeria</taxon>
    </lineage>
</organism>
<name>TMCAL_LISMH</name>
<proteinExistence type="inferred from homology"/>
<protein>
    <recommendedName>
        <fullName evidence="1">tRNA(Met) cytidine acetate ligase</fullName>
        <ecNumber evidence="1">6.3.4.-</ecNumber>
    </recommendedName>
</protein>
<sequence length="390" mass="43552">MKATGIVVEYNPFHNGHKLHLNKARELTQADVVIAVMSGSFVQRGEPAIIPKWERAKMALAAGVDMVIELPVSFATQHATIFAEEAVRILDAIHVDTLFFGSEHGVAEDFTFAAKKVVENEARFDEAIQLALVDKKTSYARAYTEAFKKLFGQNLLDITKPNNILGFHYALAAQNQNPSISLQTIPREHAGYHDEEANHDQIASATAIRKLILAGKLEEASHYLPASSIAILRNYEGPFLSWKDYWSFLQYRLIQAGSEELEGIRGVSEGIQNRMQQAATKAQNFSDFIELTKTKRYSNTRLQRTALQILLNARSQTSSPYIRILGMNKTGQQYLSLHKKNISLPIVTTVSKAPVGLLEEELRATNIYTLAKGLENYQAGDFHIPPILTL</sequence>
<reference key="1">
    <citation type="journal article" date="2011" name="J. Bacteriol.">
        <title>Genome sequence of lineage III Listeria monocytogenes strain HCC23.</title>
        <authorList>
            <person name="Steele C.L."/>
            <person name="Donaldson J.R."/>
            <person name="Paul D."/>
            <person name="Banes M.M."/>
            <person name="Arick T."/>
            <person name="Bridges S.M."/>
            <person name="Lawrence M.L."/>
        </authorList>
    </citation>
    <scope>NUCLEOTIDE SEQUENCE [LARGE SCALE GENOMIC DNA]</scope>
    <source>
        <strain>HCC23</strain>
    </source>
</reference>
<comment type="function">
    <text evidence="1">Catalyzes the formation of N(4)-acetylcytidine (ac(4)C) at the wobble position of elongator tRNA(Met), using acetate and ATP as substrates. First activates an acetate ion to form acetyladenylate (Ac-AMP) and then transfers the acetyl group to tRNA to form ac(4)C34.</text>
</comment>
<comment type="catalytic activity">
    <reaction evidence="1">
        <text>cytidine(34) in elongator tRNA(Met) + acetate + ATP = N(4)-acetylcytidine(34) in elongator tRNA(Met) + AMP + diphosphate</text>
        <dbReference type="Rhea" id="RHEA:58144"/>
        <dbReference type="Rhea" id="RHEA-COMP:10693"/>
        <dbReference type="Rhea" id="RHEA-COMP:10694"/>
        <dbReference type="ChEBI" id="CHEBI:30089"/>
        <dbReference type="ChEBI" id="CHEBI:30616"/>
        <dbReference type="ChEBI" id="CHEBI:33019"/>
        <dbReference type="ChEBI" id="CHEBI:74900"/>
        <dbReference type="ChEBI" id="CHEBI:82748"/>
        <dbReference type="ChEBI" id="CHEBI:456215"/>
    </reaction>
</comment>
<comment type="subcellular location">
    <subcellularLocation>
        <location evidence="1">Cytoplasm</location>
    </subcellularLocation>
</comment>
<comment type="similarity">
    <text evidence="1">Belongs to the TmcAL family.</text>
</comment>
<evidence type="ECO:0000255" key="1">
    <source>
        <dbReference type="HAMAP-Rule" id="MF_01539"/>
    </source>
</evidence>
<feature type="chain" id="PRO_1000185219" description="tRNA(Met) cytidine acetate ligase">
    <location>
        <begin position="1"/>
        <end position="390"/>
    </location>
</feature>
<feature type="binding site" evidence="1">
    <location>
        <begin position="7"/>
        <end position="20"/>
    </location>
    <ligand>
        <name>ATP</name>
        <dbReference type="ChEBI" id="CHEBI:30616"/>
    </ligand>
</feature>
<feature type="binding site" evidence="1">
    <location>
        <position position="101"/>
    </location>
    <ligand>
        <name>ATP</name>
        <dbReference type="ChEBI" id="CHEBI:30616"/>
    </ligand>
</feature>
<feature type="binding site" evidence="1">
    <location>
        <position position="162"/>
    </location>
    <ligand>
        <name>ATP</name>
        <dbReference type="ChEBI" id="CHEBI:30616"/>
    </ligand>
</feature>
<feature type="binding site" evidence="1">
    <location>
        <position position="187"/>
    </location>
    <ligand>
        <name>ATP</name>
        <dbReference type="ChEBI" id="CHEBI:30616"/>
    </ligand>
</feature>